<evidence type="ECO:0000255" key="1"/>
<evidence type="ECO:0000305" key="2"/>
<sequence>MYHGQKLAKLGRESHHRMLMLRTMVTQLIRHERIKTTLAKAKALRKEADRIITIAKRNTRLSHSLVYSYVTDKQVIPKLFKELRLRFGDRPGGYTRVLKAGSRLSDRSKMAYIEYVENDLVPLRDYKANNSKFAVIRKPTPQGTVFNFEEKETGKIYSSAISLNNRFKRLEQLKKQSTSSSN</sequence>
<dbReference type="EMBL" id="AAFI02000041">
    <property type="protein sequence ID" value="EAL66699.1"/>
    <property type="molecule type" value="Genomic_DNA"/>
</dbReference>
<dbReference type="RefSeq" id="XP_640676.1">
    <property type="nucleotide sequence ID" value="XM_635584.1"/>
</dbReference>
<dbReference type="SMR" id="Q54TY5"/>
<dbReference type="FunCoup" id="Q54TY5">
    <property type="interactions" value="186"/>
</dbReference>
<dbReference type="STRING" id="44689.Q54TY5"/>
<dbReference type="PaxDb" id="44689-DDB0267020"/>
<dbReference type="EnsemblProtists" id="EAL66699">
    <property type="protein sequence ID" value="EAL66699"/>
    <property type="gene ID" value="DDB_G0281435"/>
</dbReference>
<dbReference type="GeneID" id="8623060"/>
<dbReference type="KEGG" id="ddi:DDB_G0281435"/>
<dbReference type="dictyBase" id="DDB_G0281435">
    <property type="gene designation" value="mrpl17"/>
</dbReference>
<dbReference type="VEuPathDB" id="AmoebaDB:DDB_G0281435"/>
<dbReference type="eggNOG" id="KOG3280">
    <property type="taxonomic scope" value="Eukaryota"/>
</dbReference>
<dbReference type="HOGENOM" id="CLU_1484606_0_0_1"/>
<dbReference type="InParanoid" id="Q54TY5"/>
<dbReference type="OMA" id="MRKPVEH"/>
<dbReference type="PhylomeDB" id="Q54TY5"/>
<dbReference type="PRO" id="PR:Q54TY5"/>
<dbReference type="Proteomes" id="UP000002195">
    <property type="component" value="Chromosome 3"/>
</dbReference>
<dbReference type="GO" id="GO:0005762">
    <property type="term" value="C:mitochondrial large ribosomal subunit"/>
    <property type="evidence" value="ECO:0000318"/>
    <property type="project" value="GO_Central"/>
</dbReference>
<dbReference type="GO" id="GO:0003735">
    <property type="term" value="F:structural constituent of ribosome"/>
    <property type="evidence" value="ECO:0000318"/>
    <property type="project" value="GO_Central"/>
</dbReference>
<dbReference type="GO" id="GO:0006412">
    <property type="term" value="P:translation"/>
    <property type="evidence" value="ECO:0007669"/>
    <property type="project" value="InterPro"/>
</dbReference>
<dbReference type="Gene3D" id="3.90.1030.10">
    <property type="entry name" value="Ribosomal protein L17"/>
    <property type="match status" value="1"/>
</dbReference>
<dbReference type="HAMAP" id="MF_01368">
    <property type="entry name" value="Ribosomal_bL17"/>
    <property type="match status" value="1"/>
</dbReference>
<dbReference type="InterPro" id="IPR000456">
    <property type="entry name" value="Ribosomal_bL17"/>
</dbReference>
<dbReference type="InterPro" id="IPR047859">
    <property type="entry name" value="Ribosomal_bL17_CS"/>
</dbReference>
<dbReference type="InterPro" id="IPR036373">
    <property type="entry name" value="Ribosomal_bL17_sf"/>
</dbReference>
<dbReference type="NCBIfam" id="TIGR00059">
    <property type="entry name" value="L17"/>
    <property type="match status" value="1"/>
</dbReference>
<dbReference type="PANTHER" id="PTHR14413:SF16">
    <property type="entry name" value="LARGE RIBOSOMAL SUBUNIT PROTEIN BL17M"/>
    <property type="match status" value="1"/>
</dbReference>
<dbReference type="PANTHER" id="PTHR14413">
    <property type="entry name" value="RIBOSOMAL PROTEIN L17"/>
    <property type="match status" value="1"/>
</dbReference>
<dbReference type="Pfam" id="PF01196">
    <property type="entry name" value="Ribosomal_L17"/>
    <property type="match status" value="1"/>
</dbReference>
<dbReference type="SUPFAM" id="SSF64263">
    <property type="entry name" value="Prokaryotic ribosomal protein L17"/>
    <property type="match status" value="1"/>
</dbReference>
<dbReference type="PROSITE" id="PS01167">
    <property type="entry name" value="RIBOSOMAL_L17"/>
    <property type="match status" value="1"/>
</dbReference>
<feature type="transit peptide" description="Mitochondrion" evidence="1">
    <location>
        <begin position="1"/>
        <end status="unknown"/>
    </location>
</feature>
<feature type="chain" id="PRO_0000323426" description="Large ribosomal subunit protein bL17m">
    <location>
        <begin status="unknown"/>
        <end position="182"/>
    </location>
</feature>
<keyword id="KW-0496">Mitochondrion</keyword>
<keyword id="KW-1185">Reference proteome</keyword>
<keyword id="KW-0687">Ribonucleoprotein</keyword>
<keyword id="KW-0689">Ribosomal protein</keyword>
<keyword id="KW-0809">Transit peptide</keyword>
<gene>
    <name type="primary">mrpl17</name>
    <name type="ORF">DDB_G0281435</name>
</gene>
<reference key="1">
    <citation type="journal article" date="2005" name="Nature">
        <title>The genome of the social amoeba Dictyostelium discoideum.</title>
        <authorList>
            <person name="Eichinger L."/>
            <person name="Pachebat J.A."/>
            <person name="Gloeckner G."/>
            <person name="Rajandream M.A."/>
            <person name="Sucgang R."/>
            <person name="Berriman M."/>
            <person name="Song J."/>
            <person name="Olsen R."/>
            <person name="Szafranski K."/>
            <person name="Xu Q."/>
            <person name="Tunggal B."/>
            <person name="Kummerfeld S."/>
            <person name="Madera M."/>
            <person name="Konfortov B.A."/>
            <person name="Rivero F."/>
            <person name="Bankier A.T."/>
            <person name="Lehmann R."/>
            <person name="Hamlin N."/>
            <person name="Davies R."/>
            <person name="Gaudet P."/>
            <person name="Fey P."/>
            <person name="Pilcher K."/>
            <person name="Chen G."/>
            <person name="Saunders D."/>
            <person name="Sodergren E.J."/>
            <person name="Davis P."/>
            <person name="Kerhornou A."/>
            <person name="Nie X."/>
            <person name="Hall N."/>
            <person name="Anjard C."/>
            <person name="Hemphill L."/>
            <person name="Bason N."/>
            <person name="Farbrother P."/>
            <person name="Desany B."/>
            <person name="Just E."/>
            <person name="Morio T."/>
            <person name="Rost R."/>
            <person name="Churcher C.M."/>
            <person name="Cooper J."/>
            <person name="Haydock S."/>
            <person name="van Driessche N."/>
            <person name="Cronin A."/>
            <person name="Goodhead I."/>
            <person name="Muzny D.M."/>
            <person name="Mourier T."/>
            <person name="Pain A."/>
            <person name="Lu M."/>
            <person name="Harper D."/>
            <person name="Lindsay R."/>
            <person name="Hauser H."/>
            <person name="James K.D."/>
            <person name="Quiles M."/>
            <person name="Madan Babu M."/>
            <person name="Saito T."/>
            <person name="Buchrieser C."/>
            <person name="Wardroper A."/>
            <person name="Felder M."/>
            <person name="Thangavelu M."/>
            <person name="Johnson D."/>
            <person name="Knights A."/>
            <person name="Loulseged H."/>
            <person name="Mungall K.L."/>
            <person name="Oliver K."/>
            <person name="Price C."/>
            <person name="Quail M.A."/>
            <person name="Urushihara H."/>
            <person name="Hernandez J."/>
            <person name="Rabbinowitsch E."/>
            <person name="Steffen D."/>
            <person name="Sanders M."/>
            <person name="Ma J."/>
            <person name="Kohara Y."/>
            <person name="Sharp S."/>
            <person name="Simmonds M.N."/>
            <person name="Spiegler S."/>
            <person name="Tivey A."/>
            <person name="Sugano S."/>
            <person name="White B."/>
            <person name="Walker D."/>
            <person name="Woodward J.R."/>
            <person name="Winckler T."/>
            <person name="Tanaka Y."/>
            <person name="Shaulsky G."/>
            <person name="Schleicher M."/>
            <person name="Weinstock G.M."/>
            <person name="Rosenthal A."/>
            <person name="Cox E.C."/>
            <person name="Chisholm R.L."/>
            <person name="Gibbs R.A."/>
            <person name="Loomis W.F."/>
            <person name="Platzer M."/>
            <person name="Kay R.R."/>
            <person name="Williams J.G."/>
            <person name="Dear P.H."/>
            <person name="Noegel A.A."/>
            <person name="Barrell B.G."/>
            <person name="Kuspa A."/>
        </authorList>
    </citation>
    <scope>NUCLEOTIDE SEQUENCE [LARGE SCALE GENOMIC DNA]</scope>
    <source>
        <strain>AX4</strain>
    </source>
</reference>
<accession>Q54TY5</accession>
<name>RM17_DICDI</name>
<proteinExistence type="inferred from homology"/>
<comment type="subcellular location">
    <subcellularLocation>
        <location evidence="2">Mitochondrion</location>
    </subcellularLocation>
</comment>
<comment type="similarity">
    <text evidence="2">Belongs to the bacterial ribosomal protein bL17 family.</text>
</comment>
<protein>
    <recommendedName>
        <fullName evidence="2">Large ribosomal subunit protein bL17m</fullName>
    </recommendedName>
    <alternativeName>
        <fullName evidence="2">39S ribosomal protein L17, mitochondrial</fullName>
        <shortName>L17mt</shortName>
        <shortName>MRP-L17</shortName>
    </alternativeName>
</protein>
<organism>
    <name type="scientific">Dictyostelium discoideum</name>
    <name type="common">Social amoeba</name>
    <dbReference type="NCBI Taxonomy" id="44689"/>
    <lineage>
        <taxon>Eukaryota</taxon>
        <taxon>Amoebozoa</taxon>
        <taxon>Evosea</taxon>
        <taxon>Eumycetozoa</taxon>
        <taxon>Dictyostelia</taxon>
        <taxon>Dictyosteliales</taxon>
        <taxon>Dictyosteliaceae</taxon>
        <taxon>Dictyostelium</taxon>
    </lineage>
</organism>